<name>TRPM1_RAT</name>
<proteinExistence type="evidence at transcript level"/>
<gene>
    <name evidence="9" type="primary">Trpm1</name>
</gene>
<accession>Q2WEA5</accession>
<accession>F1M9X0</accession>
<accession>Q2WEA4</accession>
<dbReference type="EMBL" id="AJ867482">
    <property type="protein sequence ID" value="CAI30141.1"/>
    <property type="molecule type" value="mRNA"/>
</dbReference>
<dbReference type="EMBL" id="AJ867483">
    <property type="protein sequence ID" value="CAI30142.1"/>
    <property type="molecule type" value="mRNA"/>
</dbReference>
<dbReference type="EMBL" id="AABR07004101">
    <property type="status" value="NOT_ANNOTATED_CDS"/>
    <property type="molecule type" value="Genomic_DNA"/>
</dbReference>
<dbReference type="RefSeq" id="NP_001032822.1">
    <property type="nucleotide sequence ID" value="NM_001037733.1"/>
</dbReference>
<dbReference type="RefSeq" id="NP_001032823.1">
    <property type="nucleotide sequence ID" value="NM_001037734.1"/>
</dbReference>
<dbReference type="SMR" id="Q2WEA5"/>
<dbReference type="FunCoup" id="Q2WEA5">
    <property type="interactions" value="1302"/>
</dbReference>
<dbReference type="STRING" id="10116.ENSRNOP00000021262"/>
<dbReference type="CarbonylDB" id="Q2WEA5"/>
<dbReference type="GlyCosmos" id="Q2WEA5">
    <property type="glycosylation" value="1 site, No reported glycans"/>
</dbReference>
<dbReference type="GlyGen" id="Q2WEA5">
    <property type="glycosylation" value="1 site"/>
</dbReference>
<dbReference type="iPTMnet" id="Q2WEA5"/>
<dbReference type="PhosphoSitePlus" id="Q2WEA5"/>
<dbReference type="PaxDb" id="10116-ENSRNOP00000062990"/>
<dbReference type="Ensembl" id="ENSRNOT00000021262.7">
    <molecule id="Q2WEA5-1"/>
    <property type="protein sequence ID" value="ENSRNOP00000021262.7"/>
    <property type="gene ID" value="ENSRNOG00000015829.8"/>
</dbReference>
<dbReference type="GeneID" id="361586"/>
<dbReference type="KEGG" id="rno:361586"/>
<dbReference type="UCSC" id="RGD:1597140">
    <molecule id="Q2WEA5-1"/>
    <property type="organism name" value="rat"/>
</dbReference>
<dbReference type="AGR" id="RGD:1597140"/>
<dbReference type="CTD" id="4308"/>
<dbReference type="RGD" id="1597140">
    <property type="gene designation" value="Trpm1"/>
</dbReference>
<dbReference type="VEuPathDB" id="HostDB:ENSRNOG00000015829"/>
<dbReference type="eggNOG" id="KOG3614">
    <property type="taxonomic scope" value="Eukaryota"/>
</dbReference>
<dbReference type="GeneTree" id="ENSGT00940000155024"/>
<dbReference type="HOGENOM" id="CLU_001390_4_1_1"/>
<dbReference type="InParanoid" id="Q2WEA5"/>
<dbReference type="OMA" id="KRECIRY"/>
<dbReference type="OrthoDB" id="59885at9989"/>
<dbReference type="PhylomeDB" id="Q2WEA5"/>
<dbReference type="TreeFam" id="TF314204"/>
<dbReference type="Reactome" id="R-RNO-3295583">
    <property type="pathway name" value="TRP channels"/>
</dbReference>
<dbReference type="PRO" id="PR:Q2WEA5"/>
<dbReference type="Proteomes" id="UP000002494">
    <property type="component" value="Chromosome 1"/>
</dbReference>
<dbReference type="Bgee" id="ENSRNOG00000015829">
    <property type="expression patterns" value="Expressed in testis and 6 other cell types or tissues"/>
</dbReference>
<dbReference type="GO" id="GO:0030424">
    <property type="term" value="C:axon"/>
    <property type="evidence" value="ECO:0007669"/>
    <property type="project" value="UniProtKB-SubCell"/>
</dbReference>
<dbReference type="GO" id="GO:0051286">
    <property type="term" value="C:cell tip"/>
    <property type="evidence" value="ECO:0000266"/>
    <property type="project" value="RGD"/>
</dbReference>
<dbReference type="GO" id="GO:0030425">
    <property type="term" value="C:dendrite"/>
    <property type="evidence" value="ECO:0000266"/>
    <property type="project" value="RGD"/>
</dbReference>
<dbReference type="GO" id="GO:0005783">
    <property type="term" value="C:endoplasmic reticulum"/>
    <property type="evidence" value="ECO:0000250"/>
    <property type="project" value="UniProtKB"/>
</dbReference>
<dbReference type="GO" id="GO:0005789">
    <property type="term" value="C:endoplasmic reticulum membrane"/>
    <property type="evidence" value="ECO:0007669"/>
    <property type="project" value="UniProtKB-SubCell"/>
</dbReference>
<dbReference type="GO" id="GO:0035841">
    <property type="term" value="C:new growing cell tip"/>
    <property type="evidence" value="ECO:0000266"/>
    <property type="project" value="RGD"/>
</dbReference>
<dbReference type="GO" id="GO:0005886">
    <property type="term" value="C:plasma membrane"/>
    <property type="evidence" value="ECO:0000318"/>
    <property type="project" value="GO_Central"/>
</dbReference>
<dbReference type="GO" id="GO:0005262">
    <property type="term" value="F:calcium channel activity"/>
    <property type="evidence" value="ECO:0000250"/>
    <property type="project" value="UniProtKB"/>
</dbReference>
<dbReference type="GO" id="GO:0005261">
    <property type="term" value="F:monoatomic cation channel activity"/>
    <property type="evidence" value="ECO:0000266"/>
    <property type="project" value="RGD"/>
</dbReference>
<dbReference type="GO" id="GO:0008324">
    <property type="term" value="F:monoatomic cation transmembrane transporter activity"/>
    <property type="evidence" value="ECO:0000250"/>
    <property type="project" value="UniProtKB"/>
</dbReference>
<dbReference type="GO" id="GO:0005216">
    <property type="term" value="F:monoatomic ion channel activity"/>
    <property type="evidence" value="ECO:0000266"/>
    <property type="project" value="RGD"/>
</dbReference>
<dbReference type="GO" id="GO:0098703">
    <property type="term" value="P:calcium ion import across plasma membrane"/>
    <property type="evidence" value="ECO:0000250"/>
    <property type="project" value="UniProtKB"/>
</dbReference>
<dbReference type="GO" id="GO:0071482">
    <property type="term" value="P:cellular response to light stimulus"/>
    <property type="evidence" value="ECO:0000266"/>
    <property type="project" value="RGD"/>
</dbReference>
<dbReference type="GO" id="GO:0007216">
    <property type="term" value="P:G protein-coupled glutamate receptor signaling pathway"/>
    <property type="evidence" value="ECO:0000250"/>
    <property type="project" value="UniProtKB"/>
</dbReference>
<dbReference type="GO" id="GO:0030001">
    <property type="term" value="P:metal ion transport"/>
    <property type="evidence" value="ECO:0000318"/>
    <property type="project" value="GO_Central"/>
</dbReference>
<dbReference type="GO" id="GO:0098655">
    <property type="term" value="P:monoatomic cation transmembrane transport"/>
    <property type="evidence" value="ECO:0000250"/>
    <property type="project" value="UniProtKB"/>
</dbReference>
<dbReference type="GO" id="GO:0008104">
    <property type="term" value="P:protein localization"/>
    <property type="evidence" value="ECO:0000266"/>
    <property type="project" value="RGD"/>
</dbReference>
<dbReference type="GO" id="GO:0051262">
    <property type="term" value="P:protein tetramerization"/>
    <property type="evidence" value="ECO:0007669"/>
    <property type="project" value="InterPro"/>
</dbReference>
<dbReference type="GO" id="GO:0046548">
    <property type="term" value="P:retinal rod cell development"/>
    <property type="evidence" value="ECO:0000266"/>
    <property type="project" value="RGD"/>
</dbReference>
<dbReference type="GO" id="GO:0007165">
    <property type="term" value="P:signal transduction"/>
    <property type="evidence" value="ECO:0000266"/>
    <property type="project" value="RGD"/>
</dbReference>
<dbReference type="GO" id="GO:0007601">
    <property type="term" value="P:visual perception"/>
    <property type="evidence" value="ECO:0000266"/>
    <property type="project" value="RGD"/>
</dbReference>
<dbReference type="Gene3D" id="1.20.5.1010">
    <property type="entry name" value="TRPM, tetramerisation domain"/>
    <property type="match status" value="1"/>
</dbReference>
<dbReference type="InterPro" id="IPR005821">
    <property type="entry name" value="Ion_trans_dom"/>
</dbReference>
<dbReference type="InterPro" id="IPR050927">
    <property type="entry name" value="TRPM"/>
</dbReference>
<dbReference type="InterPro" id="IPR041491">
    <property type="entry name" value="TRPM_SLOG"/>
</dbReference>
<dbReference type="InterPro" id="IPR032415">
    <property type="entry name" value="TRPM_tetra"/>
</dbReference>
<dbReference type="InterPro" id="IPR037162">
    <property type="entry name" value="TRPM_tetra_sf"/>
</dbReference>
<dbReference type="PANTHER" id="PTHR13800:SF13">
    <property type="entry name" value="TRANSIENT RECEPTOR POTENTIAL CATION CHANNEL SUBFAMILY M MEMBER 1"/>
    <property type="match status" value="1"/>
</dbReference>
<dbReference type="PANTHER" id="PTHR13800">
    <property type="entry name" value="TRANSIENT RECEPTOR POTENTIAL CATION CHANNEL, SUBFAMILY M, MEMBER 6"/>
    <property type="match status" value="1"/>
</dbReference>
<dbReference type="Pfam" id="PF00520">
    <property type="entry name" value="Ion_trans"/>
    <property type="match status" value="1"/>
</dbReference>
<dbReference type="Pfam" id="PF18139">
    <property type="entry name" value="LSDAT_euk"/>
    <property type="match status" value="1"/>
</dbReference>
<dbReference type="Pfam" id="PF25508">
    <property type="entry name" value="TRPM2"/>
    <property type="match status" value="1"/>
</dbReference>
<dbReference type="Pfam" id="PF16519">
    <property type="entry name" value="TRPM_tetra"/>
    <property type="match status" value="1"/>
</dbReference>
<sequence length="1630" mass="184523">MGSMRKMSSSFKRGSIKSSTSGSQKGQKAWIEKTFCKRECIFVIPSTKDPNRCCCGQLTNQHIPPLPSVTPSSTAEDTKQGDAQSGKWSVSKHTQSYPTDSYGILEFQGGGYSNKAMYIRVSYDTKPDSLLHLMVKDWQLELPKLLISVHGGLQSFEMQPKLKQVFGKGLIKAAMTTGAWIFTGGVSTGKSVVSHVGDALKDHSSKSRGRLCAIGIAPWGMVENKEDLVGKDVTRVYQTMSNPLSKLSVLNNSHTHFILADNGTLGKYGAEVKLRRQLEKHISLQKINTRLGQGVPVVGLVVEGGPNVVSIVLEYLREDPPVPVVVCDGSGRASDILSFAHKYCDEGGVINESLRDQLLVTIQKTFNYSKSQSHQLFAIIMECMKKKELVTVFRMGSEGQQDVEMAILTALLKGTNVSAPDQLSLALAWNRVDIARSQIFVFGPHWPPLGSLAPPVDTKVAEKEKKPPTATTKGRGKGKGKKKGKVKEEVEEETDPRKIELLNWVNALEQAMLDALVLDRVDFVKLLIENGVNMQHFLTIPRLEELYNTRLGPPNTLHLLVRDVKKSNLPPDYHISLIDIGLVLEYLMGGAYRCNYTRKSFRTLYNNLFGPKRPKALKLLGMEDDEPPAKGKKKKKKKKEEEIDIDVDDPAVSRFQYPFHELMVWAVLMKRQKMAVFLWQRGEECMAKALVACKLYKAMAHESSESELVDDISQDLDNNSKDFGQLAVELLDQSYKHDEQVAMKLLTYELKNWSNSTCLKLAVAAKHRDFIAHTCSQMLLTDMWMGRLRMRKNPGLKVIMGILIPPTILFLEFRSYDDFSYQTSKENEDGKEKEEENVDANADAGSRKGDEENEHKKQRSIPIGTKICEFYNAPIVKFWFYTISYLGYLLLFNYVILVRMDGWPSPQEWIVISYIVSLALEKIREILMSEPGKLSQKIKVWLQEYWNITDLVAISMFMVGAILRLQNQPYMGYGRVIYCVDIILWYIRVLDIFGVNKYLGPYVMMIGKMMIDMLYFVVIMLVVLMSFGVARQAILHPEEKPSWKLARNIFYMPYWMIYGEVFADQIDRKTRIHIYAMEINPPCGENLYDEEGKRLPPCIPGAWLTPALMACYLLVANILLVNLLIAVFNNTFFEVKSISNQVWKFQRYQLIMTFHDRPVLPPPMIILSHIYIIVMRLSGRCRKKREGDQEERDRGLKLFLSDEELKKLHEFEEQCVQEHFREKEDEQQSSSDERIRVTSERVENMSMRLEEINERENFMKASLQTVDLRLSQLEELSGRMVGALENLAGIDRSDLIQARSRASSECEATYLLRQSSINSADGYSMYRYHFNGEELLFEEPALSTSPGTVFRKKTCSFRVKEEDVKSHLDQPSSLHHTPGPSPPATPGRSRLALDGPLSTELRPGLDPGISAGELDPRADFKSAEVAPSLNTANVASTQLTVESTVSHPLRESKLARYYPGDLNTYKTMKSRSFVYSEGRKLVRGLSNWGAEYSSIMDQTWNSAEWRCQVQRITRSRSTDIPYIVSEAASQDEFEDEHRESLLAPQISRSALTVSDRPEKENLLSVKPHQTLGFPCLRSRSLHGHPRSAKPSPSKLDRAGHASSTSNLAVMSDAPEGQNTQQEKGNPETEC</sequence>
<reference evidence="8 9" key="1">
    <citation type="journal article" date="2005" name="Naunyn Schmiedebergs Arch. Pharmacol.">
        <title>Transcriptional regulation and processing increase the functional variability of TRPM channels.</title>
        <authorList>
            <person name="Lis A."/>
            <person name="Wissenbach U."/>
            <person name="Philipp S.E."/>
        </authorList>
    </citation>
    <scope>NUCLEOTIDE SEQUENCE [MRNA]</scope>
    <scope>ALTERNATIVE SPLICING (ISOFORMS 1 AND 2)</scope>
    <source>
        <strain evidence="9">Dark agouti</strain>
        <tissue evidence="9">Eye</tissue>
    </source>
</reference>
<reference key="2">
    <citation type="journal article" date="2004" name="Nature">
        <title>Genome sequence of the Brown Norway rat yields insights into mammalian evolution.</title>
        <authorList>
            <person name="Gibbs R.A."/>
            <person name="Weinstock G.M."/>
            <person name="Metzker M.L."/>
            <person name="Muzny D.M."/>
            <person name="Sodergren E.J."/>
            <person name="Scherer S."/>
            <person name="Scott G."/>
            <person name="Steffen D."/>
            <person name="Worley K.C."/>
            <person name="Burch P.E."/>
            <person name="Okwuonu G."/>
            <person name="Hines S."/>
            <person name="Lewis L."/>
            <person name="Deramo C."/>
            <person name="Delgado O."/>
            <person name="Dugan-Rocha S."/>
            <person name="Miner G."/>
            <person name="Morgan M."/>
            <person name="Hawes A."/>
            <person name="Gill R."/>
            <person name="Holt R.A."/>
            <person name="Adams M.D."/>
            <person name="Amanatides P.G."/>
            <person name="Baden-Tillson H."/>
            <person name="Barnstead M."/>
            <person name="Chin S."/>
            <person name="Evans C.A."/>
            <person name="Ferriera S."/>
            <person name="Fosler C."/>
            <person name="Glodek A."/>
            <person name="Gu Z."/>
            <person name="Jennings D."/>
            <person name="Kraft C.L."/>
            <person name="Nguyen T."/>
            <person name="Pfannkoch C.M."/>
            <person name="Sitter C."/>
            <person name="Sutton G.G."/>
            <person name="Venter J.C."/>
            <person name="Woodage T."/>
            <person name="Smith D."/>
            <person name="Lee H.-M."/>
            <person name="Gustafson E."/>
            <person name="Cahill P."/>
            <person name="Kana A."/>
            <person name="Doucette-Stamm L."/>
            <person name="Weinstock K."/>
            <person name="Fechtel K."/>
            <person name="Weiss R.B."/>
            <person name="Dunn D.M."/>
            <person name="Green E.D."/>
            <person name="Blakesley R.W."/>
            <person name="Bouffard G.G."/>
            <person name="De Jong P.J."/>
            <person name="Osoegawa K."/>
            <person name="Zhu B."/>
            <person name="Marra M."/>
            <person name="Schein J."/>
            <person name="Bosdet I."/>
            <person name="Fjell C."/>
            <person name="Jones S."/>
            <person name="Krzywinski M."/>
            <person name="Mathewson C."/>
            <person name="Siddiqui A."/>
            <person name="Wye N."/>
            <person name="McPherson J."/>
            <person name="Zhao S."/>
            <person name="Fraser C.M."/>
            <person name="Shetty J."/>
            <person name="Shatsman S."/>
            <person name="Geer K."/>
            <person name="Chen Y."/>
            <person name="Abramzon S."/>
            <person name="Nierman W.C."/>
            <person name="Havlak P.H."/>
            <person name="Chen R."/>
            <person name="Durbin K.J."/>
            <person name="Egan A."/>
            <person name="Ren Y."/>
            <person name="Song X.-Z."/>
            <person name="Li B."/>
            <person name="Liu Y."/>
            <person name="Qin X."/>
            <person name="Cawley S."/>
            <person name="Cooney A.J."/>
            <person name="D'Souza L.M."/>
            <person name="Martin K."/>
            <person name="Wu J.Q."/>
            <person name="Gonzalez-Garay M.L."/>
            <person name="Jackson A.R."/>
            <person name="Kalafus K.J."/>
            <person name="McLeod M.P."/>
            <person name="Milosavljevic A."/>
            <person name="Virk D."/>
            <person name="Volkov A."/>
            <person name="Wheeler D.A."/>
            <person name="Zhang Z."/>
            <person name="Bailey J.A."/>
            <person name="Eichler E.E."/>
            <person name="Tuzun E."/>
            <person name="Birney E."/>
            <person name="Mongin E."/>
            <person name="Ureta-Vidal A."/>
            <person name="Woodwark C."/>
            <person name="Zdobnov E."/>
            <person name="Bork P."/>
            <person name="Suyama M."/>
            <person name="Torrents D."/>
            <person name="Alexandersson M."/>
            <person name="Trask B.J."/>
            <person name="Young J.M."/>
            <person name="Huang H."/>
            <person name="Wang H."/>
            <person name="Xing H."/>
            <person name="Daniels S."/>
            <person name="Gietzen D."/>
            <person name="Schmidt J."/>
            <person name="Stevens K."/>
            <person name="Vitt U."/>
            <person name="Wingrove J."/>
            <person name="Camara F."/>
            <person name="Mar Alba M."/>
            <person name="Abril J.F."/>
            <person name="Guigo R."/>
            <person name="Smit A."/>
            <person name="Dubchak I."/>
            <person name="Rubin E.M."/>
            <person name="Couronne O."/>
            <person name="Poliakov A."/>
            <person name="Huebner N."/>
            <person name="Ganten D."/>
            <person name="Goesele C."/>
            <person name="Hummel O."/>
            <person name="Kreitler T."/>
            <person name="Lee Y.-A."/>
            <person name="Monti J."/>
            <person name="Schulz H."/>
            <person name="Zimdahl H."/>
            <person name="Himmelbauer H."/>
            <person name="Lehrach H."/>
            <person name="Jacob H.J."/>
            <person name="Bromberg S."/>
            <person name="Gullings-Handley J."/>
            <person name="Jensen-Seaman M.I."/>
            <person name="Kwitek A.E."/>
            <person name="Lazar J."/>
            <person name="Pasko D."/>
            <person name="Tonellato P.J."/>
            <person name="Twigger S."/>
            <person name="Ponting C.P."/>
            <person name="Duarte J.M."/>
            <person name="Rice S."/>
            <person name="Goodstadt L."/>
            <person name="Beatson S.A."/>
            <person name="Emes R.D."/>
            <person name="Winter E.E."/>
            <person name="Webber C."/>
            <person name="Brandt P."/>
            <person name="Nyakatura G."/>
            <person name="Adetobi M."/>
            <person name="Chiaromonte F."/>
            <person name="Elnitski L."/>
            <person name="Eswara P."/>
            <person name="Hardison R.C."/>
            <person name="Hou M."/>
            <person name="Kolbe D."/>
            <person name="Makova K."/>
            <person name="Miller W."/>
            <person name="Nekrutenko A."/>
            <person name="Riemer C."/>
            <person name="Schwartz S."/>
            <person name="Taylor J."/>
            <person name="Yang S."/>
            <person name="Zhang Y."/>
            <person name="Lindpaintner K."/>
            <person name="Andrews T.D."/>
            <person name="Caccamo M."/>
            <person name="Clamp M."/>
            <person name="Clarke L."/>
            <person name="Curwen V."/>
            <person name="Durbin R.M."/>
            <person name="Eyras E."/>
            <person name="Searle S.M."/>
            <person name="Cooper G.M."/>
            <person name="Batzoglou S."/>
            <person name="Brudno M."/>
            <person name="Sidow A."/>
            <person name="Stone E.A."/>
            <person name="Payseur B.A."/>
            <person name="Bourque G."/>
            <person name="Lopez-Otin C."/>
            <person name="Puente X.S."/>
            <person name="Chakrabarti K."/>
            <person name="Chatterji S."/>
            <person name="Dewey C."/>
            <person name="Pachter L."/>
            <person name="Bray N."/>
            <person name="Yap V.B."/>
            <person name="Caspi A."/>
            <person name="Tesler G."/>
            <person name="Pevzner P.A."/>
            <person name="Haussler D."/>
            <person name="Roskin K.M."/>
            <person name="Baertsch R."/>
            <person name="Clawson H."/>
            <person name="Furey T.S."/>
            <person name="Hinrichs A.S."/>
            <person name="Karolchik D."/>
            <person name="Kent W.J."/>
            <person name="Rosenbloom K.R."/>
            <person name="Trumbower H."/>
            <person name="Weirauch M."/>
            <person name="Cooper D.N."/>
            <person name="Stenson P.D."/>
            <person name="Ma B."/>
            <person name="Brent M."/>
            <person name="Arumugam M."/>
            <person name="Shteynberg D."/>
            <person name="Copley R.R."/>
            <person name="Taylor M.S."/>
            <person name="Riethman H."/>
            <person name="Mudunuri U."/>
            <person name="Peterson J."/>
            <person name="Guyer M."/>
            <person name="Felsenfeld A."/>
            <person name="Old S."/>
            <person name="Mockrin S."/>
            <person name="Collins F.S."/>
        </authorList>
    </citation>
    <scope>NUCLEOTIDE SEQUENCE [LARGE SCALE GENOMIC DNA]</scope>
    <source>
        <strain>Brown Norway</strain>
    </source>
</reference>
<feature type="chain" id="PRO_0000328932" description="Transient receptor potential cation channel subfamily M member 1">
    <location>
        <begin position="1"/>
        <end position="1630"/>
    </location>
</feature>
<feature type="topological domain" description="Cytoplasmic" evidence="2">
    <location>
        <begin position="1"/>
        <end position="877"/>
    </location>
</feature>
<feature type="transmembrane region" description="Helical" evidence="3">
    <location>
        <begin position="878"/>
        <end position="898"/>
    </location>
</feature>
<feature type="topological domain" description="Extracellular" evidence="8">
    <location>
        <begin position="899"/>
        <end position="944"/>
    </location>
</feature>
<feature type="transmembrane region" description="Helical" evidence="3">
    <location>
        <begin position="945"/>
        <end position="965"/>
    </location>
</feature>
<feature type="topological domain" description="Cytoplasmic" evidence="8">
    <location>
        <begin position="966"/>
        <end position="975"/>
    </location>
</feature>
<feature type="transmembrane region" description="Helical" evidence="3">
    <location>
        <begin position="976"/>
        <end position="996"/>
    </location>
</feature>
<feature type="topological domain" description="Extracellular" evidence="8">
    <location>
        <begin position="997"/>
        <end position="1008"/>
    </location>
</feature>
<feature type="transmembrane region" description="Helical" evidence="3">
    <location>
        <begin position="1009"/>
        <end position="1029"/>
    </location>
</feature>
<feature type="topological domain" description="Cytoplasmic" evidence="8">
    <location>
        <begin position="1030"/>
        <end position="1107"/>
    </location>
</feature>
<feature type="transmembrane region" description="Helical" evidence="3">
    <location>
        <begin position="1108"/>
        <end position="1128"/>
    </location>
</feature>
<feature type="topological domain" description="Extracellular" evidence="8">
    <location>
        <begin position="1129"/>
        <end position="1158"/>
    </location>
</feature>
<feature type="transmembrane region" description="Helical" evidence="3">
    <location>
        <begin position="1159"/>
        <end position="1179"/>
    </location>
</feature>
<feature type="topological domain" description="Cytoplasmic" evidence="2">
    <location>
        <begin position="1180"/>
        <end position="1630"/>
    </location>
</feature>
<feature type="region of interest" description="Disordered" evidence="5">
    <location>
        <begin position="1"/>
        <end position="25"/>
    </location>
</feature>
<feature type="region of interest" description="Disordered" evidence="5">
    <location>
        <begin position="65"/>
        <end position="92"/>
    </location>
</feature>
<feature type="region of interest" description="Disordered" evidence="5">
    <location>
        <begin position="453"/>
        <end position="492"/>
    </location>
</feature>
<feature type="region of interest" description="Disordered" evidence="5">
    <location>
        <begin position="620"/>
        <end position="643"/>
    </location>
</feature>
<feature type="region of interest" description="Disordered" evidence="5">
    <location>
        <begin position="824"/>
        <end position="858"/>
    </location>
</feature>
<feature type="region of interest" description="Disordered" evidence="5">
    <location>
        <begin position="1362"/>
        <end position="1414"/>
    </location>
</feature>
<feature type="region of interest" description="Disordered" evidence="5">
    <location>
        <begin position="1575"/>
        <end position="1630"/>
    </location>
</feature>
<feature type="coiled-coil region" evidence="3">
    <location>
        <begin position="1235"/>
        <end position="1255"/>
    </location>
</feature>
<feature type="compositionally biased region" description="Low complexity" evidence="5">
    <location>
        <begin position="8"/>
        <end position="25"/>
    </location>
</feature>
<feature type="compositionally biased region" description="Polar residues" evidence="5">
    <location>
        <begin position="69"/>
        <end position="92"/>
    </location>
</feature>
<feature type="compositionally biased region" description="Basic residues" evidence="5">
    <location>
        <begin position="474"/>
        <end position="485"/>
    </location>
</feature>
<feature type="compositionally biased region" description="Basic and acidic residues" evidence="5">
    <location>
        <begin position="825"/>
        <end position="834"/>
    </location>
</feature>
<feature type="compositionally biased region" description="Basic and acidic residues" evidence="5">
    <location>
        <begin position="845"/>
        <end position="855"/>
    </location>
</feature>
<feature type="glycosylation site" description="N-linked (GlcNAc...) asparagine" evidence="4">
    <location>
        <position position="1129"/>
    </location>
</feature>
<feature type="splice variant" id="VSP_052740" description="In isoform 2." evidence="7">
    <original>RKTRIHI</original>
    <variation>L</variation>
    <location>
        <begin position="1068"/>
        <end position="1074"/>
    </location>
</feature>
<feature type="sequence conflict" description="In Ref. 1; CAI30141/CAI30142." evidence="8" ref="1">
    <location>
        <begin position="190"/>
        <end position="191"/>
    </location>
</feature>
<feature type="sequence conflict" description="In Ref. 1; CAI30141/CAI30142." evidence="8" ref="1">
    <original>S</original>
    <variation>P</variation>
    <location>
        <position position="1366"/>
    </location>
</feature>
<comment type="function">
    <text evidence="1 2">Constitutively open nonselective divalent cation-conducting channels which mediate the influx of Ca(2+), Mg(2+), Mn(2+), Ba(2+), and Ni(2+) into the cytoplasm, leading to membrane depolarization. Impermeable to zinc ions. In addition, forms heteromultimeric ion channels with TRPM3 which are permeable for calcium and zinc ions. Plays an essential role for the depolarizing photoresponse of retinal ON bipolar cells (By similarity). In the dark, tonic release of glutamate activates the G-protein coupled receptor for glutamate GRM6, its activation induces the release of G(o) protein and the beta-gamma G protein dimer. Both subunits can interact and inactivate the TRPM1 channel. A light onset, induces decrease in glutamate release and deactivation of GRM6 leading to channel opening and membrane depolarization (By similarity). May play a role in metastasis suppression (By similarity).</text>
</comment>
<comment type="catalytic activity">
    <reaction evidence="2">
        <text>Ca(2+)(in) = Ca(2+)(out)</text>
        <dbReference type="Rhea" id="RHEA:29671"/>
        <dbReference type="ChEBI" id="CHEBI:29108"/>
    </reaction>
</comment>
<comment type="catalytic activity">
    <reaction evidence="2">
        <text>Mg(2+)(in) = Mg(2+)(out)</text>
        <dbReference type="Rhea" id="RHEA:29827"/>
        <dbReference type="ChEBI" id="CHEBI:18420"/>
    </reaction>
</comment>
<comment type="catalytic activity">
    <reaction evidence="2">
        <text>Mn(2+)(in) = Mn(2+)(out)</text>
        <dbReference type="Rhea" id="RHEA:28699"/>
        <dbReference type="ChEBI" id="CHEBI:29035"/>
    </reaction>
</comment>
<comment type="catalytic activity">
    <reaction evidence="2">
        <text>Ni(2+)(in) = Ni(2+)(out)</text>
        <dbReference type="Rhea" id="RHEA:29831"/>
        <dbReference type="ChEBI" id="CHEBI:49786"/>
    </reaction>
</comment>
<comment type="activity regulation">
    <text evidence="1 2">Inhibited by extracellular zinc ions. Inhibited by intracellular Mg(2+). Activated by the neuroactive steroid pregnenolone sulfate (By similarity). Negatively regulated by activation of GRM6 receptors in the ON-bipolar cells (By similarity).</text>
</comment>
<comment type="subunit">
    <text evidence="1 2">Interacts with TRPM3; the interaction results in the formation of a heteromultimeric cation channel complex that are functionally different from the homomeric channels (By similarity). Interacts with GPR179 (By similarity). Associates with both guanine nucleotide-binding proteins G(o) and beta-gamma G protein dimer; implicated in directly regulating TRPM1 channel open-state (By similarity).</text>
</comment>
<comment type="subcellular location">
    <subcellularLocation>
        <location evidence="2">Cell membrane</location>
        <topology evidence="3">Multi-pass membrane protein</topology>
    </subcellularLocation>
    <subcellularLocation>
        <location evidence="1">Endoplasmic reticulum membrane</location>
        <topology evidence="3">Multi-pass membrane protein</topology>
    </subcellularLocation>
    <subcellularLocation>
        <location evidence="1">Cell projection</location>
        <location evidence="1">Axon</location>
    </subcellularLocation>
    <text evidence="2">In ON-bipolar cells is intracellular and located predominantly in the ER, and not at the plasma membrane or Golgi apparatus.</text>
</comment>
<comment type="alternative products">
    <event type="alternative splicing"/>
    <isoform>
        <id>Q2WEA5-1</id>
        <name evidence="6">1</name>
        <sequence type="displayed"/>
    </isoform>
    <isoform>
        <id>Q2WEA5-2</id>
        <name evidence="6">2</name>
        <sequence type="described" ref="VSP_052740"/>
    </isoform>
</comment>
<comment type="similarity">
    <text evidence="8">Belongs to the transient receptor (TC 1.A.4) family. LTrpC subfamily. TRPM1 sub-subfamily.</text>
</comment>
<protein>
    <recommendedName>
        <fullName>Transient receptor potential cation channel subfamily M member 1</fullName>
    </recommendedName>
    <alternativeName>
        <fullName>Melastatin-1</fullName>
    </alternativeName>
</protein>
<keyword id="KW-0025">Alternative splicing</keyword>
<keyword id="KW-1003">Cell membrane</keyword>
<keyword id="KW-0966">Cell projection</keyword>
<keyword id="KW-0175">Coiled coil</keyword>
<keyword id="KW-0256">Endoplasmic reticulum</keyword>
<keyword id="KW-0325">Glycoprotein</keyword>
<keyword id="KW-0407">Ion channel</keyword>
<keyword id="KW-0406">Ion transport</keyword>
<keyword id="KW-1071">Ligand-gated ion channel</keyword>
<keyword id="KW-0472">Membrane</keyword>
<keyword id="KW-0675">Receptor</keyword>
<keyword id="KW-1185">Reference proteome</keyword>
<keyword id="KW-0812">Transmembrane</keyword>
<keyword id="KW-1133">Transmembrane helix</keyword>
<keyword id="KW-0813">Transport</keyword>
<evidence type="ECO:0000250" key="1">
    <source>
        <dbReference type="UniProtKB" id="Q2TV84"/>
    </source>
</evidence>
<evidence type="ECO:0000250" key="2">
    <source>
        <dbReference type="UniProtKB" id="Q7Z4N2"/>
    </source>
</evidence>
<evidence type="ECO:0000255" key="3"/>
<evidence type="ECO:0000255" key="4">
    <source>
        <dbReference type="PROSITE-ProRule" id="PRU00498"/>
    </source>
</evidence>
<evidence type="ECO:0000256" key="5">
    <source>
        <dbReference type="SAM" id="MobiDB-lite"/>
    </source>
</evidence>
<evidence type="ECO:0000269" key="6">
    <source>
    </source>
</evidence>
<evidence type="ECO:0000303" key="7">
    <source>
    </source>
</evidence>
<evidence type="ECO:0000305" key="8"/>
<evidence type="ECO:0000312" key="9">
    <source>
        <dbReference type="EMBL" id="CAI30141.1"/>
    </source>
</evidence>
<organism>
    <name type="scientific">Rattus norvegicus</name>
    <name type="common">Rat</name>
    <dbReference type="NCBI Taxonomy" id="10116"/>
    <lineage>
        <taxon>Eukaryota</taxon>
        <taxon>Metazoa</taxon>
        <taxon>Chordata</taxon>
        <taxon>Craniata</taxon>
        <taxon>Vertebrata</taxon>
        <taxon>Euteleostomi</taxon>
        <taxon>Mammalia</taxon>
        <taxon>Eutheria</taxon>
        <taxon>Euarchontoglires</taxon>
        <taxon>Glires</taxon>
        <taxon>Rodentia</taxon>
        <taxon>Myomorpha</taxon>
        <taxon>Muroidea</taxon>
        <taxon>Muridae</taxon>
        <taxon>Murinae</taxon>
        <taxon>Rattus</taxon>
    </lineage>
</organism>